<keyword id="KW-0997">Cell inner membrane</keyword>
<keyword id="KW-1003">Cell membrane</keyword>
<keyword id="KW-0472">Membrane</keyword>
<keyword id="KW-0500">Molybdenum</keyword>
<keyword id="KW-1185">Reference proteome</keyword>
<keyword id="KW-0812">Transmembrane</keyword>
<keyword id="KW-1133">Transmembrane helix</keyword>
<keyword id="KW-0813">Transport</keyword>
<protein>
    <recommendedName>
        <fullName>Molybdenum transport system permease protein ModB</fullName>
    </recommendedName>
</protein>
<accession>P0AF01</accession>
<accession>P09834</accession>
<accession>P77537</accession>
<reference key="1">
    <citation type="journal article" date="1995" name="J. Bacteriol.">
        <title>Genetic analysis of the modABCD (molybdate transport) operon of Escherichia coli.</title>
        <authorList>
            <person name="Maupin-Furlow J.A."/>
            <person name="Rosentel J.K."/>
            <person name="Lee J.H."/>
            <person name="Deppenmeier U."/>
            <person name="Gunsalus R.P."/>
            <person name="Shanmugam K.T."/>
        </authorList>
    </citation>
    <scope>NUCLEOTIDE SEQUENCE [GENOMIC DNA]</scope>
    <source>
        <strain>K12</strain>
    </source>
</reference>
<reference key="2">
    <citation type="journal article" date="1995" name="Microbiol. Res.">
        <title>Molecular analysis of the molybdate uptake operon, modABCD, of Escherichia coli and modR, a regulatory gene.</title>
        <authorList>
            <person name="Walkenhorst H.M."/>
            <person name="Hemschemeier S.K."/>
            <person name="Eichenlaub R."/>
        </authorList>
    </citation>
    <scope>NUCLEOTIDE SEQUENCE [GENOMIC DNA]</scope>
    <source>
        <strain>K12 / MC1000 / ATCC 39531</strain>
    </source>
</reference>
<reference key="3">
    <citation type="journal article" date="1996" name="DNA Res.">
        <title>A 718-kb DNA sequence of the Escherichia coli K-12 genome corresponding to the 12.7-28.0 min region on the linkage map.</title>
        <authorList>
            <person name="Oshima T."/>
            <person name="Aiba H."/>
            <person name="Baba T."/>
            <person name="Fujita K."/>
            <person name="Hayashi K."/>
            <person name="Honjo A."/>
            <person name="Ikemoto K."/>
            <person name="Inada T."/>
            <person name="Itoh T."/>
            <person name="Kajihara M."/>
            <person name="Kanai K."/>
            <person name="Kashimoto K."/>
            <person name="Kimura S."/>
            <person name="Kitagawa M."/>
            <person name="Makino K."/>
            <person name="Masuda S."/>
            <person name="Miki T."/>
            <person name="Mizobuchi K."/>
            <person name="Mori H."/>
            <person name="Motomura K."/>
            <person name="Nakamura Y."/>
            <person name="Nashimoto H."/>
            <person name="Nishio Y."/>
            <person name="Saito N."/>
            <person name="Sampei G."/>
            <person name="Seki Y."/>
            <person name="Tagami H."/>
            <person name="Takemoto K."/>
            <person name="Wada C."/>
            <person name="Yamamoto Y."/>
            <person name="Yano M."/>
            <person name="Horiuchi T."/>
        </authorList>
    </citation>
    <scope>NUCLEOTIDE SEQUENCE [LARGE SCALE GENOMIC DNA]</scope>
    <source>
        <strain>K12 / W3110 / ATCC 27325 / DSM 5911</strain>
    </source>
</reference>
<reference key="4">
    <citation type="journal article" date="1997" name="Science">
        <title>The complete genome sequence of Escherichia coli K-12.</title>
        <authorList>
            <person name="Blattner F.R."/>
            <person name="Plunkett G. III"/>
            <person name="Bloch C.A."/>
            <person name="Perna N.T."/>
            <person name="Burland V."/>
            <person name="Riley M."/>
            <person name="Collado-Vides J."/>
            <person name="Glasner J.D."/>
            <person name="Rode C.K."/>
            <person name="Mayhew G.F."/>
            <person name="Gregor J."/>
            <person name="Davis N.W."/>
            <person name="Kirkpatrick H.A."/>
            <person name="Goeden M.A."/>
            <person name="Rose D.J."/>
            <person name="Mau B."/>
            <person name="Shao Y."/>
        </authorList>
    </citation>
    <scope>NUCLEOTIDE SEQUENCE [LARGE SCALE GENOMIC DNA]</scope>
    <source>
        <strain>K12 / MG1655 / ATCC 47076</strain>
    </source>
</reference>
<reference key="5">
    <citation type="journal article" date="2006" name="Mol. Syst. Biol.">
        <title>Highly accurate genome sequences of Escherichia coli K-12 strains MG1655 and W3110.</title>
        <authorList>
            <person name="Hayashi K."/>
            <person name="Morooka N."/>
            <person name="Yamamoto Y."/>
            <person name="Fujita K."/>
            <person name="Isono K."/>
            <person name="Choi S."/>
            <person name="Ohtsubo E."/>
            <person name="Baba T."/>
            <person name="Wanner B.L."/>
            <person name="Mori H."/>
            <person name="Horiuchi T."/>
        </authorList>
    </citation>
    <scope>NUCLEOTIDE SEQUENCE [LARGE SCALE GENOMIC DNA]</scope>
    <source>
        <strain>K12 / W3110 / ATCC 27325 / DSM 5911</strain>
    </source>
</reference>
<reference key="6">
    <citation type="journal article" date="1987" name="J. Bacteriol.">
        <title>Cloning and nucleotide sequence of the chlD locus.</title>
        <authorList>
            <person name="Johann S."/>
            <person name="Hinton S.M."/>
        </authorList>
    </citation>
    <scope>NUCLEOTIDE SEQUENCE [GENOMIC DNA] OF 30-229</scope>
    <source>
        <strain>K12</strain>
    </source>
</reference>
<reference key="7">
    <citation type="journal article" date="2005" name="Science">
        <title>Global topology analysis of the Escherichia coli inner membrane proteome.</title>
        <authorList>
            <person name="Daley D.O."/>
            <person name="Rapp M."/>
            <person name="Granseth E."/>
            <person name="Melen K."/>
            <person name="Drew D."/>
            <person name="von Heijne G."/>
        </authorList>
    </citation>
    <scope>TOPOLOGY [LARGE SCALE ANALYSIS]</scope>
    <source>
        <strain>K12 / MG1655 / ATCC 47076</strain>
    </source>
</reference>
<proteinExistence type="evidence at protein level"/>
<organism>
    <name type="scientific">Escherichia coli (strain K12)</name>
    <dbReference type="NCBI Taxonomy" id="83333"/>
    <lineage>
        <taxon>Bacteria</taxon>
        <taxon>Pseudomonadati</taxon>
        <taxon>Pseudomonadota</taxon>
        <taxon>Gammaproteobacteria</taxon>
        <taxon>Enterobacterales</taxon>
        <taxon>Enterobacteriaceae</taxon>
        <taxon>Escherichia</taxon>
    </lineage>
</organism>
<comment type="function">
    <text>Part of the binding-protein-dependent transport system for molybdenum; probably responsible for the translocation of the substrate across the membrane.</text>
</comment>
<comment type="subcellular location">
    <subcellularLocation>
        <location>Cell inner membrane</location>
        <topology>Multi-pass membrane protein</topology>
    </subcellularLocation>
</comment>
<comment type="similarity">
    <text evidence="3">Belongs to the binding-protein-dependent transport system permease family. CysTW subfamily.</text>
</comment>
<name>MODB_ECOLI</name>
<evidence type="ECO:0000255" key="1"/>
<evidence type="ECO:0000255" key="2">
    <source>
        <dbReference type="PROSITE-ProRule" id="PRU00441"/>
    </source>
</evidence>
<evidence type="ECO:0000305" key="3"/>
<gene>
    <name type="primary">modB</name>
    <name type="synonym">chlJ</name>
    <name type="ordered locus">b0764</name>
    <name type="ordered locus">JW0747</name>
</gene>
<dbReference type="EMBL" id="L34009">
    <property type="protein sequence ID" value="AAB00836.1"/>
    <property type="molecule type" value="Genomic_DNA"/>
</dbReference>
<dbReference type="EMBL" id="U27192">
    <property type="protein sequence ID" value="AAB60172.1"/>
    <property type="molecule type" value="Genomic_DNA"/>
</dbReference>
<dbReference type="EMBL" id="U07867">
    <property type="protein sequence ID" value="AAB06894.1"/>
    <property type="molecule type" value="Genomic_DNA"/>
</dbReference>
<dbReference type="EMBL" id="U00096">
    <property type="protein sequence ID" value="AAC73851.1"/>
    <property type="molecule type" value="Genomic_DNA"/>
</dbReference>
<dbReference type="EMBL" id="AP009048">
    <property type="protein sequence ID" value="BAA35428.1"/>
    <property type="molecule type" value="Genomic_DNA"/>
</dbReference>
<dbReference type="EMBL" id="M16182">
    <property type="protein sequence ID" value="AAA83839.1"/>
    <property type="molecule type" value="Genomic_DNA"/>
</dbReference>
<dbReference type="PIR" id="D64812">
    <property type="entry name" value="BVECHJ"/>
</dbReference>
<dbReference type="RefSeq" id="NP_415285.1">
    <property type="nucleotide sequence ID" value="NC_000913.3"/>
</dbReference>
<dbReference type="RefSeq" id="WP_000604034.1">
    <property type="nucleotide sequence ID" value="NZ_STEB01000028.1"/>
</dbReference>
<dbReference type="SMR" id="P0AF01"/>
<dbReference type="BioGRID" id="4261270">
    <property type="interactions" value="12"/>
</dbReference>
<dbReference type="ComplexPortal" id="CPX-4342">
    <property type="entry name" value="Molybdate ABC transporter complex"/>
</dbReference>
<dbReference type="FunCoup" id="P0AF01">
    <property type="interactions" value="387"/>
</dbReference>
<dbReference type="IntAct" id="P0AF01">
    <property type="interactions" value="4"/>
</dbReference>
<dbReference type="STRING" id="511145.b0764"/>
<dbReference type="TCDB" id="3.A.1.8.1">
    <property type="family name" value="the atp-binding cassette (abc) superfamily"/>
</dbReference>
<dbReference type="PaxDb" id="511145-b0764"/>
<dbReference type="EnsemblBacteria" id="AAC73851">
    <property type="protein sequence ID" value="AAC73851"/>
    <property type="gene ID" value="b0764"/>
</dbReference>
<dbReference type="GeneID" id="93776717"/>
<dbReference type="GeneID" id="945361"/>
<dbReference type="KEGG" id="ecj:JW0747"/>
<dbReference type="KEGG" id="eco:b0764"/>
<dbReference type="KEGG" id="ecoc:C3026_03875"/>
<dbReference type="PATRIC" id="fig|1411691.4.peg.1514"/>
<dbReference type="EchoBASE" id="EB0002"/>
<dbReference type="eggNOG" id="COG4149">
    <property type="taxonomic scope" value="Bacteria"/>
</dbReference>
<dbReference type="HOGENOM" id="CLU_016047_14_3_6"/>
<dbReference type="InParanoid" id="P0AF01"/>
<dbReference type="OMA" id="MYSFIET"/>
<dbReference type="OrthoDB" id="9774448at2"/>
<dbReference type="PhylomeDB" id="P0AF01"/>
<dbReference type="BioCyc" id="EcoCyc:MODB-MONOMER"/>
<dbReference type="BioCyc" id="MetaCyc:MODB-MONOMER"/>
<dbReference type="PRO" id="PR:P0AF01"/>
<dbReference type="Proteomes" id="UP000000625">
    <property type="component" value="Chromosome"/>
</dbReference>
<dbReference type="GO" id="GO:0055052">
    <property type="term" value="C:ATP-binding cassette (ABC) transporter complex, substrate-binding subunit-containing"/>
    <property type="evidence" value="ECO:0000303"/>
    <property type="project" value="ComplexPortal"/>
</dbReference>
<dbReference type="GO" id="GO:0016020">
    <property type="term" value="C:membrane"/>
    <property type="evidence" value="ECO:0000303"/>
    <property type="project" value="ComplexPortal"/>
</dbReference>
<dbReference type="GO" id="GO:0005886">
    <property type="term" value="C:plasma membrane"/>
    <property type="evidence" value="ECO:0000314"/>
    <property type="project" value="EcoCyc"/>
</dbReference>
<dbReference type="GO" id="GO:0015098">
    <property type="term" value="F:molybdate ion transmembrane transporter activity"/>
    <property type="evidence" value="ECO:0000269"/>
    <property type="project" value="EcoCyc"/>
</dbReference>
<dbReference type="GO" id="GO:0015689">
    <property type="term" value="P:molybdate ion transport"/>
    <property type="evidence" value="ECO:0000269"/>
    <property type="project" value="EcoCyc"/>
</dbReference>
<dbReference type="GO" id="GO:0070614">
    <property type="term" value="P:tungstate ion transport"/>
    <property type="evidence" value="ECO:0000303"/>
    <property type="project" value="ComplexPortal"/>
</dbReference>
<dbReference type="CDD" id="cd06261">
    <property type="entry name" value="TM_PBP2"/>
    <property type="match status" value="1"/>
</dbReference>
<dbReference type="FunFam" id="1.10.3720.10:FF:000018">
    <property type="entry name" value="Molybdenum transport system permease"/>
    <property type="match status" value="1"/>
</dbReference>
<dbReference type="Gene3D" id="1.10.3720.10">
    <property type="entry name" value="MetI-like"/>
    <property type="match status" value="1"/>
</dbReference>
<dbReference type="InterPro" id="IPR000515">
    <property type="entry name" value="MetI-like"/>
</dbReference>
<dbReference type="InterPro" id="IPR035906">
    <property type="entry name" value="MetI-like_sf"/>
</dbReference>
<dbReference type="InterPro" id="IPR011867">
    <property type="entry name" value="ModB_ABC"/>
</dbReference>
<dbReference type="NCBIfam" id="TIGR02141">
    <property type="entry name" value="modB_ABC"/>
    <property type="match status" value="1"/>
</dbReference>
<dbReference type="NCBIfam" id="NF006939">
    <property type="entry name" value="PRK09421.1"/>
    <property type="match status" value="1"/>
</dbReference>
<dbReference type="PANTHER" id="PTHR30183">
    <property type="entry name" value="MOLYBDENUM TRANSPORT SYSTEM PERMEASE PROTEIN MODB"/>
    <property type="match status" value="1"/>
</dbReference>
<dbReference type="PANTHER" id="PTHR30183:SF3">
    <property type="entry name" value="MOLYBDENUM TRANSPORT SYSTEM PERMEASE PROTEIN MODB"/>
    <property type="match status" value="1"/>
</dbReference>
<dbReference type="Pfam" id="PF00528">
    <property type="entry name" value="BPD_transp_1"/>
    <property type="match status" value="1"/>
</dbReference>
<dbReference type="SUPFAM" id="SSF161098">
    <property type="entry name" value="MetI-like"/>
    <property type="match status" value="1"/>
</dbReference>
<dbReference type="PROSITE" id="PS50928">
    <property type="entry name" value="ABC_TM1"/>
    <property type="match status" value="1"/>
</dbReference>
<sequence>MILTDPEWQAVLLSLKVSSLAVLFSLPFGIFFAWLLVRCTFPGKALLDSVLHLPLVLPPVVVGYLLLVSMGRRGFIGERLYDWFGITFAFSWRGAVLAAAVMSFPLMVRAIRLALEGVDVKLEQAARTLGAGRWRVFFTITLPLTLPGIIVGTVLAFARSLGEFGATITFVSNIPGETRTIPSAMYTLIQTPGGESGAARLCIISIALAMISLLISEWLARISRERAGR</sequence>
<feature type="chain" id="PRO_0000060111" description="Molybdenum transport system permease protein ModB">
    <location>
        <begin position="1"/>
        <end position="229"/>
    </location>
</feature>
<feature type="topological domain" description="Periplasmic" evidence="1">
    <location>
        <begin position="1"/>
        <end position="16"/>
    </location>
</feature>
<feature type="transmembrane region" description="Helical" evidence="2">
    <location>
        <begin position="17"/>
        <end position="37"/>
    </location>
</feature>
<feature type="topological domain" description="Cytoplasmic" evidence="1">
    <location>
        <begin position="38"/>
        <end position="49"/>
    </location>
</feature>
<feature type="transmembrane region" description="Helical" evidence="2">
    <location>
        <begin position="50"/>
        <end position="70"/>
    </location>
</feature>
<feature type="topological domain" description="Periplasmic" evidence="1">
    <location>
        <begin position="71"/>
        <end position="83"/>
    </location>
</feature>
<feature type="transmembrane region" description="Helical" evidence="2">
    <location>
        <begin position="84"/>
        <end position="104"/>
    </location>
</feature>
<feature type="topological domain" description="Cytoplasmic" evidence="1">
    <location>
        <begin position="105"/>
        <end position="136"/>
    </location>
</feature>
<feature type="transmembrane region" description="Helical" evidence="2">
    <location>
        <begin position="137"/>
        <end position="157"/>
    </location>
</feature>
<feature type="topological domain" description="Periplasmic" evidence="1">
    <location>
        <begin position="158"/>
        <end position="201"/>
    </location>
</feature>
<feature type="transmembrane region" description="Helical" evidence="2">
    <location>
        <begin position="202"/>
        <end position="222"/>
    </location>
</feature>
<feature type="topological domain" description="Cytoplasmic" evidence="1">
    <location>
        <begin position="223"/>
        <end position="229"/>
    </location>
</feature>
<feature type="domain" description="ABC transmembrane type-1" evidence="2">
    <location>
        <begin position="11"/>
        <end position="219"/>
    </location>
</feature>
<feature type="sequence conflict" description="In Ref. 1, 2 and 6." evidence="3" ref="1 2 6">
    <original>T</original>
    <variation>S</variation>
    <location>
        <position position="40"/>
    </location>
</feature>